<evidence type="ECO:0000255" key="1">
    <source>
        <dbReference type="HAMAP-Rule" id="MF_00126"/>
    </source>
</evidence>
<evidence type="ECO:0000305" key="2"/>
<protein>
    <recommendedName>
        <fullName evidence="1">Glutamine--tRNA ligase</fullName>
        <ecNumber evidence="1">6.1.1.18</ecNumber>
    </recommendedName>
    <alternativeName>
        <fullName evidence="1">Glutaminyl-tRNA synthetase</fullName>
        <shortName evidence="1">GlnRS</shortName>
    </alternativeName>
</protein>
<proteinExistence type="inferred from homology"/>
<gene>
    <name evidence="1" type="primary">glnS</name>
    <name type="ordered locus">PM0528</name>
</gene>
<accession>P57847</accession>
<reference key="1">
    <citation type="journal article" date="2001" name="Proc. Natl. Acad. Sci. U.S.A.">
        <title>Complete genomic sequence of Pasteurella multocida Pm70.</title>
        <authorList>
            <person name="May B.J."/>
            <person name="Zhang Q."/>
            <person name="Li L.L."/>
            <person name="Paustian M.L."/>
            <person name="Whittam T.S."/>
            <person name="Kapur V."/>
        </authorList>
    </citation>
    <scope>NUCLEOTIDE SEQUENCE [LARGE SCALE GENOMIC DNA]</scope>
    <source>
        <strain>Pm70</strain>
    </source>
</reference>
<organism>
    <name type="scientific">Pasteurella multocida (strain Pm70)</name>
    <dbReference type="NCBI Taxonomy" id="272843"/>
    <lineage>
        <taxon>Bacteria</taxon>
        <taxon>Pseudomonadati</taxon>
        <taxon>Pseudomonadota</taxon>
        <taxon>Gammaproteobacteria</taxon>
        <taxon>Pasteurellales</taxon>
        <taxon>Pasteurellaceae</taxon>
        <taxon>Pasteurella</taxon>
    </lineage>
</organism>
<name>SYQ_PASMU</name>
<sequence>MSHPVENVVAAENTEKRPTNFIRQIIDEDLASGKHTGVQTRFPPEPNGYLHIGHAKSICLNFGIAEDYQGLCNLRFDDTNPVKEDVEYVDSIKQDVEWLGFKWEGEPRYASDYFDQLYGYAIELIEKGLAYVDELSPEEMREYRGTLTEPGKNSPYRDRSIEENLALFEKMKNGEIAEGKACLRAKIDMASPFIVMRDPVIYRIKFATHHQTGDKWCIYPMYDFTHCISDAIERITHSLCTLEFQDNRRLYDWVLENISIARPLPHQYEFSRLNLESTLTSKRKLLQLVNEGIVDGWNDPRMPTISGLRRRGYTPASLREFCRRIGVTKQDNMVEFSALEACIREDLNENAPRAMAVINPLKIVIENFSGKEMLTAPNHPNRDELGVRELPFTRELYIDQADFREEANKQYKRLVLGKEVRLRNAYVIKAERVEKDAEENITTVYCTYDPDTLGKNPADGRKVKGVIQWVSAEDYLPAEFRQYGRLFTVANPGAAEDIHQVLNPDSLVIKQGVVEKSLANAQPEKAYQFEREGYYCADSKDSRPDHLVFNLTVSLKEGF</sequence>
<dbReference type="EC" id="6.1.1.18" evidence="1"/>
<dbReference type="EMBL" id="AE004439">
    <property type="protein sequence ID" value="AAK02612.1"/>
    <property type="molecule type" value="Genomic_DNA"/>
</dbReference>
<dbReference type="RefSeq" id="WP_010906709.1">
    <property type="nucleotide sequence ID" value="NC_002663.1"/>
</dbReference>
<dbReference type="SMR" id="P57847"/>
<dbReference type="STRING" id="272843.PM0528"/>
<dbReference type="EnsemblBacteria" id="AAK02612">
    <property type="protein sequence ID" value="AAK02612"/>
    <property type="gene ID" value="PM0528"/>
</dbReference>
<dbReference type="KEGG" id="pmu:PM0528"/>
<dbReference type="PATRIC" id="fig|272843.6.peg.534"/>
<dbReference type="HOGENOM" id="CLU_001882_2_3_6"/>
<dbReference type="OrthoDB" id="9801560at2"/>
<dbReference type="Proteomes" id="UP000000809">
    <property type="component" value="Chromosome"/>
</dbReference>
<dbReference type="GO" id="GO:0005829">
    <property type="term" value="C:cytosol"/>
    <property type="evidence" value="ECO:0007669"/>
    <property type="project" value="TreeGrafter"/>
</dbReference>
<dbReference type="GO" id="GO:0005524">
    <property type="term" value="F:ATP binding"/>
    <property type="evidence" value="ECO:0007669"/>
    <property type="project" value="UniProtKB-UniRule"/>
</dbReference>
<dbReference type="GO" id="GO:0004819">
    <property type="term" value="F:glutamine-tRNA ligase activity"/>
    <property type="evidence" value="ECO:0007669"/>
    <property type="project" value="UniProtKB-UniRule"/>
</dbReference>
<dbReference type="GO" id="GO:0006425">
    <property type="term" value="P:glutaminyl-tRNA aminoacylation"/>
    <property type="evidence" value="ECO:0007669"/>
    <property type="project" value="InterPro"/>
</dbReference>
<dbReference type="GO" id="GO:0006424">
    <property type="term" value="P:glutamyl-tRNA aminoacylation"/>
    <property type="evidence" value="ECO:0007669"/>
    <property type="project" value="UniProtKB-UniRule"/>
</dbReference>
<dbReference type="CDD" id="cd00807">
    <property type="entry name" value="GlnRS_core"/>
    <property type="match status" value="1"/>
</dbReference>
<dbReference type="FunFam" id="1.10.1160.10:FF:000001">
    <property type="entry name" value="Glutamine--tRNA ligase"/>
    <property type="match status" value="1"/>
</dbReference>
<dbReference type="FunFam" id="2.40.240.10:FF:000001">
    <property type="entry name" value="Glutamine--tRNA ligase"/>
    <property type="match status" value="1"/>
</dbReference>
<dbReference type="FunFam" id="3.90.800.10:FF:000001">
    <property type="entry name" value="Glutamine--tRNA ligase"/>
    <property type="match status" value="1"/>
</dbReference>
<dbReference type="FunFam" id="3.40.50.620:FF:000037">
    <property type="entry name" value="Glutamine--tRNA ligase cytoplasmic"/>
    <property type="match status" value="1"/>
</dbReference>
<dbReference type="Gene3D" id="1.10.1160.10">
    <property type="entry name" value="Glutamyl-trna Synthetase, Domain 2"/>
    <property type="match status" value="1"/>
</dbReference>
<dbReference type="Gene3D" id="3.90.800.10">
    <property type="entry name" value="Glutamyl-tRNA Synthetase, Domain 3"/>
    <property type="match status" value="1"/>
</dbReference>
<dbReference type="Gene3D" id="3.40.50.620">
    <property type="entry name" value="HUPs"/>
    <property type="match status" value="1"/>
</dbReference>
<dbReference type="Gene3D" id="2.40.240.10">
    <property type="entry name" value="Ribosomal Protein L25, Chain P"/>
    <property type="match status" value="2"/>
</dbReference>
<dbReference type="HAMAP" id="MF_00126">
    <property type="entry name" value="Gln_tRNA_synth"/>
    <property type="match status" value="1"/>
</dbReference>
<dbReference type="InterPro" id="IPR001412">
    <property type="entry name" value="aa-tRNA-synth_I_CS"/>
</dbReference>
<dbReference type="InterPro" id="IPR004514">
    <property type="entry name" value="Gln-tRNA-synth"/>
</dbReference>
<dbReference type="InterPro" id="IPR050132">
    <property type="entry name" value="Gln/Glu-tRNA_Ligase"/>
</dbReference>
<dbReference type="InterPro" id="IPR022861">
    <property type="entry name" value="Gln_tRNA_ligase_bac"/>
</dbReference>
<dbReference type="InterPro" id="IPR000924">
    <property type="entry name" value="Glu/Gln-tRNA-synth"/>
</dbReference>
<dbReference type="InterPro" id="IPR020058">
    <property type="entry name" value="Glu/Gln-tRNA-synth_Ib_cat-dom"/>
</dbReference>
<dbReference type="InterPro" id="IPR020059">
    <property type="entry name" value="Glu/Gln-tRNA-synth_Ib_codon-bd"/>
</dbReference>
<dbReference type="InterPro" id="IPR020061">
    <property type="entry name" value="Glu_tRNA_lig_a-bdl"/>
</dbReference>
<dbReference type="InterPro" id="IPR020056">
    <property type="entry name" value="Rbsml_bL25/Gln-tRNA_synth_N"/>
</dbReference>
<dbReference type="InterPro" id="IPR011035">
    <property type="entry name" value="Ribosomal_bL25/Gln-tRNA_synth"/>
</dbReference>
<dbReference type="InterPro" id="IPR014729">
    <property type="entry name" value="Rossmann-like_a/b/a_fold"/>
</dbReference>
<dbReference type="InterPro" id="IPR049437">
    <property type="entry name" value="tRNA-synt_1c_C2"/>
</dbReference>
<dbReference type="NCBIfam" id="TIGR00440">
    <property type="entry name" value="glnS"/>
    <property type="match status" value="1"/>
</dbReference>
<dbReference type="NCBIfam" id="NF011291">
    <property type="entry name" value="PRK14703.1"/>
    <property type="match status" value="1"/>
</dbReference>
<dbReference type="PANTHER" id="PTHR43097:SF5">
    <property type="entry name" value="GLUTAMATE--TRNA LIGASE"/>
    <property type="match status" value="1"/>
</dbReference>
<dbReference type="PANTHER" id="PTHR43097">
    <property type="entry name" value="GLUTAMINE-TRNA LIGASE"/>
    <property type="match status" value="1"/>
</dbReference>
<dbReference type="Pfam" id="PF00749">
    <property type="entry name" value="tRNA-synt_1c"/>
    <property type="match status" value="1"/>
</dbReference>
<dbReference type="Pfam" id="PF03950">
    <property type="entry name" value="tRNA-synt_1c_C"/>
    <property type="match status" value="1"/>
</dbReference>
<dbReference type="Pfam" id="PF20974">
    <property type="entry name" value="tRNA-synt_1c_C2"/>
    <property type="match status" value="1"/>
</dbReference>
<dbReference type="PRINTS" id="PR00987">
    <property type="entry name" value="TRNASYNTHGLU"/>
</dbReference>
<dbReference type="SUPFAM" id="SSF52374">
    <property type="entry name" value="Nucleotidylyl transferase"/>
    <property type="match status" value="1"/>
</dbReference>
<dbReference type="SUPFAM" id="SSF50715">
    <property type="entry name" value="Ribosomal protein L25-like"/>
    <property type="match status" value="1"/>
</dbReference>
<dbReference type="PROSITE" id="PS00178">
    <property type="entry name" value="AA_TRNA_LIGASE_I"/>
    <property type="match status" value="1"/>
</dbReference>
<feature type="chain" id="PRO_0000195841" description="Glutamine--tRNA ligase">
    <location>
        <begin position="1"/>
        <end position="559"/>
    </location>
</feature>
<feature type="short sequence motif" description="'HIGH' region" evidence="1">
    <location>
        <begin position="44"/>
        <end position="54"/>
    </location>
</feature>
<feature type="short sequence motif" description="'KMSKS' region" evidence="1">
    <location>
        <begin position="279"/>
        <end position="283"/>
    </location>
</feature>
<feature type="binding site" evidence="1">
    <location>
        <begin position="45"/>
        <end position="47"/>
    </location>
    <ligand>
        <name>ATP</name>
        <dbReference type="ChEBI" id="CHEBI:30616"/>
    </ligand>
</feature>
<feature type="binding site" evidence="1">
    <location>
        <begin position="51"/>
        <end position="57"/>
    </location>
    <ligand>
        <name>ATP</name>
        <dbReference type="ChEBI" id="CHEBI:30616"/>
    </ligand>
</feature>
<feature type="binding site" evidence="1">
    <location>
        <position position="77"/>
    </location>
    <ligand>
        <name>L-glutamine</name>
        <dbReference type="ChEBI" id="CHEBI:58359"/>
    </ligand>
</feature>
<feature type="binding site" evidence="1">
    <location>
        <position position="222"/>
    </location>
    <ligand>
        <name>L-glutamine</name>
        <dbReference type="ChEBI" id="CHEBI:58359"/>
    </ligand>
</feature>
<feature type="binding site" evidence="1">
    <location>
        <position position="241"/>
    </location>
    <ligand>
        <name>ATP</name>
        <dbReference type="ChEBI" id="CHEBI:30616"/>
    </ligand>
</feature>
<feature type="binding site" evidence="1">
    <location>
        <begin position="272"/>
        <end position="273"/>
    </location>
    <ligand>
        <name>ATP</name>
        <dbReference type="ChEBI" id="CHEBI:30616"/>
    </ligand>
</feature>
<keyword id="KW-0030">Aminoacyl-tRNA synthetase</keyword>
<keyword id="KW-0067">ATP-binding</keyword>
<keyword id="KW-0963">Cytoplasm</keyword>
<keyword id="KW-0436">Ligase</keyword>
<keyword id="KW-0547">Nucleotide-binding</keyword>
<keyword id="KW-0648">Protein biosynthesis</keyword>
<keyword id="KW-1185">Reference proteome</keyword>
<comment type="catalytic activity">
    <reaction evidence="1">
        <text>tRNA(Gln) + L-glutamine + ATP = L-glutaminyl-tRNA(Gln) + AMP + diphosphate</text>
        <dbReference type="Rhea" id="RHEA:20121"/>
        <dbReference type="Rhea" id="RHEA-COMP:9662"/>
        <dbReference type="Rhea" id="RHEA-COMP:9681"/>
        <dbReference type="ChEBI" id="CHEBI:30616"/>
        <dbReference type="ChEBI" id="CHEBI:33019"/>
        <dbReference type="ChEBI" id="CHEBI:58359"/>
        <dbReference type="ChEBI" id="CHEBI:78442"/>
        <dbReference type="ChEBI" id="CHEBI:78521"/>
        <dbReference type="ChEBI" id="CHEBI:456215"/>
        <dbReference type="EC" id="6.1.1.18"/>
    </reaction>
</comment>
<comment type="subunit">
    <text evidence="1">Monomer.</text>
</comment>
<comment type="subcellular location">
    <subcellularLocation>
        <location evidence="1">Cytoplasm</location>
    </subcellularLocation>
</comment>
<comment type="similarity">
    <text evidence="1 2">Belongs to the class-I aminoacyl-tRNA synthetase family.</text>
</comment>